<organism>
    <name type="scientific">Mus musculus</name>
    <name type="common">Mouse</name>
    <dbReference type="NCBI Taxonomy" id="10090"/>
    <lineage>
        <taxon>Eukaryota</taxon>
        <taxon>Metazoa</taxon>
        <taxon>Chordata</taxon>
        <taxon>Craniata</taxon>
        <taxon>Vertebrata</taxon>
        <taxon>Euteleostomi</taxon>
        <taxon>Mammalia</taxon>
        <taxon>Eutheria</taxon>
        <taxon>Euarchontoglires</taxon>
        <taxon>Glires</taxon>
        <taxon>Rodentia</taxon>
        <taxon>Myomorpha</taxon>
        <taxon>Muroidea</taxon>
        <taxon>Muridae</taxon>
        <taxon>Murinae</taxon>
        <taxon>Mus</taxon>
        <taxon>Mus</taxon>
    </lineage>
</organism>
<proteinExistence type="evidence at protein level"/>
<protein>
    <recommendedName>
        <fullName>SWI/SNF-related matrix-associated actin-dependent regulator of chromatin subfamily A member 2</fullName>
        <shortName evidence="15">SAMRCA2</shortName>
        <ecNumber evidence="1">3.6.4.-</ecNumber>
    </recommendedName>
    <alternativeName>
        <fullName>BRG1-associated factor 190B</fullName>
        <shortName>BAF190B</shortName>
    </alternativeName>
    <alternativeName>
        <fullName>Probable global transcription activator SNF2L2</fullName>
    </alternativeName>
    <alternativeName>
        <fullName>Protein brahma homolog</fullName>
    </alternativeName>
    <alternativeName>
        <fullName>SNF2-alpha</fullName>
    </alternativeName>
</protein>
<sequence length="1577" mass="180253">MSTPTDPAAMPHPGPSPGPGPSPGPILGPSPGPGPSPGSVHSMMGPSPGPPSVSHPLSTMGSADFPQEGMHQLHKPMDGIHDKGIVEDVHCGSMKGTSMRPPHPGMGPPQSPMDQHSQGYMSPHPSPLGAPEHVSSPTPPQMPPSQPGALIPGDPQAMNQPNRGPSPFSPVQLHQLRAQILAYKMLARGQPLPETLQLAVQGKRTLPGMQQQQQQQQQQQQQQQQQQQQQQQQQQPQQPQQQAQAQPQQQQQQQQQPALVSYNRPSGPGQELLLSGQSAPQKLSAPAPSGRPSPAPQAAVQPTATAVPGPSVQQPAPGQPSPVLQLQQKQSRISPIQKPQGLDPVEILQEREYRLQARIAHRIQELESLPGSLPPDLRTKATVELKALRLLNFQRQLRQEVVACMRRDTTLETALNSKAYKRSKRQTLREARMTEKLEKQQKIEQERKRRQKHQEYLNSILQHAKDFKEYHRSVAGKIQKLSKAVATWHANTEREQKKETERIEKERMRRLMAEDEEGYRKLIDQKKDRRLAYLLQQTDEYVANLTNLVWEHKQAQAAKEKKKRRRRKKKAEENAEGGEPALGPDGEPIDESSQMSDLPVKVTHTETGKVLFGPEAPKASQLDAWLEMNPGYEVAPRSDSEESESDYEEEDEEEESSRQETEEKILLDPNSEEVSEKDAKQIIETAKQDVDDEYSMQYSARGSQSYYTVAHAISERVEKQSALLINGTLKHYQLQGLEWMVSLYNNNLNGILADEMGLGKTIQTIALITYLMEHKRLNGPYLIIVPLSTLSNWTYEFDKWAPSVVKISYKGTPAMRRSLVPQLRSGKFNVLLTTYEYIIKDKHILAKIRWKYMIVDEGHRMKNHHCKLTQVLNTHYVAPRRILLTGTPLQNKLPELWALLNFLLPTIFKSCSTFEQWFNAPFAMTGERVDLNEEETILIIRRLHKVLRPFLLRRLKKEVESQLPEKVEYVIKCDMSALQKILYRHMQAKGILLTDGSEKDKKGKGGAKTLMNTIMQLRKICNHPYMFQHIEESFAEHLGYSNGVINGAELYRASGKFELLDRILPKLRATNHRVLLFCQMTSLMTIMEDYFAFRNFLYLRLDGTTKSEDRAALLKKFNEPGSQYFIFLLSTRAGGLGLNLQAADTVVIFDSDWNPHQDLQAQDRAHRIGQQNEVRVLRLCTVNSVEEKILAAAKYKLNVDQKVIQAGMFDQKSSSHERRAFLQAILEHEEENEEEDEVPDDETLNQMIARREEEFDLFMRMDMDRRREDARNPKRKPRLMEEDELPSWIIKDDAEVERLTCEEEEEKIFGRGSRQRRDVDYSDALTEKQWLRAIEDGNLEEMEEEVRLKKRKRRRNVDKDPVKEDVEKAKKRRGRPPAEKLSPNPPKLTKQMNAIIDTVINYKDSSGRQLSEVFIQLPSRKDLPEYYELIRKPVDFKKIKERIRNHKYRSLGDLEKDVMLLCHNAQTFNLEGSQIYEDSIVLQSVFKSARQKIAKEEESEEESNEEEEEDDEEESESEAKSVKVKIKLNKKEEKGRDTGKGKKRPNRGKAKPVVSDFDSDEEQEENEQSEASGTDNE</sequence>
<accession>Q6DIC0</accession>
<reference key="1">
    <citation type="journal article" date="2004" name="Genome Res.">
        <title>The status, quality, and expansion of the NIH full-length cDNA project: the Mammalian Gene Collection (MGC).</title>
        <authorList>
            <consortium name="The MGC Project Team"/>
        </authorList>
    </citation>
    <scope>NUCLEOTIDE SEQUENCE [LARGE SCALE MRNA]</scope>
    <source>
        <strain>C57BL/6J</strain>
        <tissue>Brain</tissue>
    </source>
</reference>
<reference key="2">
    <citation type="journal article" date="2004" name="Genes Dev.">
        <title>Liver tumors escape negative control of proliferation via PI3K/Akt-mediated block of C/EBP alpha growth inhibitory activity.</title>
        <authorList>
            <person name="Wang G.L."/>
            <person name="Iakova P."/>
            <person name="Wilde M."/>
            <person name="Awad S."/>
            <person name="Timchenko N.A."/>
        </authorList>
    </citation>
    <scope>INTERACTION WITH CEBPA</scope>
</reference>
<reference key="3">
    <citation type="journal article" date="2007" name="Neuron">
        <title>An essential switch in subunit composition of a chromatin remodeling complex during neural development.</title>
        <authorList>
            <person name="Lessard J."/>
            <person name="Wu J.I."/>
            <person name="Ranish J.A."/>
            <person name="Wan M."/>
            <person name="Winslow M.M."/>
            <person name="Staahl B.T."/>
            <person name="Wu H."/>
            <person name="Aebersold R."/>
            <person name="Graef I.A."/>
            <person name="Crabtree G.R."/>
        </authorList>
    </citation>
    <scope>FUNCTION OF THE NBAF AND NPBAF COMPLEXES</scope>
    <scope>IDENTIFICATION BY MASS SPECTROMETRY</scope>
    <scope>IDENTIFICATION IN THE NBAF AND NPBAF COMPLEXES</scope>
    <scope>INTERACTION WITH PHF10</scope>
</reference>
<reference key="4">
    <citation type="journal article" date="2007" name="Proc. Natl. Acad. Sci. U.S.A.">
        <title>Large-scale phosphorylation analysis of mouse liver.</title>
        <authorList>
            <person name="Villen J."/>
            <person name="Beausoleil S.A."/>
            <person name="Gerber S.A."/>
            <person name="Gygi S.P."/>
        </authorList>
    </citation>
    <scope>PHOSPHORYLATION [LARGE SCALE ANALYSIS] AT SER-334; SER-1499 AND SER-1503</scope>
    <scope>IDENTIFICATION BY MASS SPECTROMETRY [LARGE SCALE ANALYSIS]</scope>
    <source>
        <tissue>Liver</tissue>
    </source>
</reference>
<reference key="5">
    <citation type="journal article" date="2009" name="Hum. Mol. Genet.">
        <title>Involvement of SMARCA2/BRM in the SWI/SNF chromatin-remodeling complex in schizophrenia.</title>
        <authorList>
            <person name="Koga M."/>
            <person name="Ishiguro H."/>
            <person name="Yazaki S."/>
            <person name="Horiuchi Y."/>
            <person name="Arai M."/>
            <person name="Niizato K."/>
            <person name="Iritani S."/>
            <person name="Itokawa M."/>
            <person name="Inada T."/>
            <person name="Iwata N."/>
            <person name="Ozaki N."/>
            <person name="Ujike H."/>
            <person name="Kunugi H."/>
            <person name="Sasaki T."/>
            <person name="Takahashi M."/>
            <person name="Watanabe Y."/>
            <person name="Someya T."/>
            <person name="Kakita A."/>
            <person name="Takahashi H."/>
            <person name="Nawa H."/>
            <person name="Muchardt C."/>
            <person name="Yaniv M."/>
            <person name="Arinami T."/>
        </authorList>
    </citation>
    <scope>DISRUPTION PHENOTYPE</scope>
</reference>
<reference key="6">
    <citation type="journal article" date="2010" name="Cell">
        <title>A tissue-specific atlas of mouse protein phosphorylation and expression.</title>
        <authorList>
            <person name="Huttlin E.L."/>
            <person name="Jedrychowski M.P."/>
            <person name="Elias J.E."/>
            <person name="Goswami T."/>
            <person name="Rad R."/>
            <person name="Beausoleil S.A."/>
            <person name="Villen J."/>
            <person name="Haas W."/>
            <person name="Sowa M.E."/>
            <person name="Gygi S.P."/>
        </authorList>
    </citation>
    <scope>PHOSPHORYLATION [LARGE SCALE ANALYSIS] AT SER-321; SER-334; SER-596; SER-1499; SER-1503 AND SER-1515</scope>
    <scope>IDENTIFICATION BY MASS SPECTROMETRY [LARGE SCALE ANALYSIS]</scope>
    <source>
        <tissue>Brain</tissue>
        <tissue>Kidney</tissue>
        <tissue>Liver</tissue>
        <tissue>Lung</tissue>
        <tissue>Pancreas</tissue>
        <tissue>Spleen</tissue>
        <tissue>Testis</tissue>
    </source>
</reference>
<reference key="7">
    <citation type="journal article" date="2010" name="EMBO J.">
        <title>Crosstalk between C/EBPbeta phosphorylation, arginine methylation, and SWI/SNF/Mediator implies an indexing transcription factor code.</title>
        <authorList>
            <person name="Kowenz-Leutz E."/>
            <person name="Pless O."/>
            <person name="Dittmar G."/>
            <person name="Knoblich M."/>
            <person name="Leutz A."/>
        </authorList>
    </citation>
    <scope>INTERACTION WITH CEBPB</scope>
</reference>
<reference key="8">
    <citation type="journal article" date="2012" name="Nat. Genet.">
        <title>Heterozygous missense mutations in SMARCA2 cause Nicolaides-Baraitser syndrome.</title>
        <authorList>
            <person name="Van Houdt J.K."/>
            <person name="Nowakowska B.A."/>
            <person name="Sousa S.B."/>
            <person name="van Schaik B.D."/>
            <person name="Seuntjens E."/>
            <person name="Avonce N."/>
            <person name="Sifrim A."/>
            <person name="Abdul-Rahman O.A."/>
            <person name="van den Boogaard M.J."/>
            <person name="Bottani A."/>
            <person name="Castori M."/>
            <person name="Cormier-Daire V."/>
            <person name="Deardorff M.A."/>
            <person name="Filges I."/>
            <person name="Fryer A."/>
            <person name="Fryns J.P."/>
            <person name="Gana S."/>
            <person name="Garavelli L."/>
            <person name="Gillessen-Kaesbach G."/>
            <person name="Hall B.D."/>
            <person name="Horn D."/>
            <person name="Huylebroeck D."/>
            <person name="Klapecki J."/>
            <person name="Krajewska-Walasek M."/>
            <person name="Kuechler A."/>
            <person name="Lines M.A."/>
            <person name="Maas S."/>
            <person name="Macdermot K.D."/>
            <person name="McKee S."/>
            <person name="Magee A."/>
            <person name="de Man S.A."/>
            <person name="Moreau Y."/>
            <person name="Morice-Picard F."/>
            <person name="Obersztyn E."/>
            <person name="Pilch J."/>
            <person name="Rosser E."/>
            <person name="Shannon N."/>
            <person name="Stolte-Dijkstra I."/>
            <person name="Van Dijck P."/>
            <person name="Vilain C."/>
            <person name="Vogels A."/>
            <person name="Wakeling E."/>
            <person name="Wieczorek D."/>
            <person name="Wilson L."/>
            <person name="Zuffardi O."/>
            <person name="van Kampen A.H."/>
            <person name="Devriendt K."/>
            <person name="Hennekam R."/>
            <person name="Vermeesch J.R."/>
        </authorList>
    </citation>
    <scope>TISSUE SPECIFICITY</scope>
</reference>
<reference key="9">
    <citation type="journal article" date="2013" name="Mol. Cell">
        <title>SIRT5-mediated lysine desuccinylation impacts diverse metabolic pathways.</title>
        <authorList>
            <person name="Park J."/>
            <person name="Chen Y."/>
            <person name="Tishkoff D.X."/>
            <person name="Peng C."/>
            <person name="Tan M."/>
            <person name="Dai L."/>
            <person name="Xie Z."/>
            <person name="Zhang Y."/>
            <person name="Zwaans B.M."/>
            <person name="Skinner M.E."/>
            <person name="Lombard D.B."/>
            <person name="Zhao Y."/>
        </authorList>
    </citation>
    <scope>ACETYLATION [LARGE SCALE ANALYSIS] AT LYS-609</scope>
    <scope>IDENTIFICATION BY MASS SPECTROMETRY [LARGE SCALE ANALYSIS]</scope>
    <source>
        <tissue>Embryonic fibroblast</tissue>
    </source>
</reference>
<reference key="10">
    <citation type="journal article" date="2012" name="J. Biol. Chem.">
        <title>SWI/SNF chromatin-remodeling factors: multiscale analyses and diverse functions.</title>
        <authorList>
            <person name="Euskirchen G."/>
            <person name="Auerbach R.K."/>
            <person name="Snyder M."/>
        </authorList>
    </citation>
    <scope>REVIEW ON SWI/SNF CHROMATIN REMODELING COMPLEXES</scope>
</reference>
<reference key="11">
    <citation type="journal article" date="2015" name="Sci. Adv.">
        <title>Mammalian SWI/SNF chromatin remodeling complexes and cancer: Mechanistic insights gained from human genomics.</title>
        <authorList>
            <person name="Kadoch C."/>
            <person name="Crabtree G.R."/>
        </authorList>
    </citation>
    <scope>REVIEW ON SWI/SNF CHROMATIN REMODELING COMPLEXES</scope>
</reference>
<keyword id="KW-0007">Acetylation</keyword>
<keyword id="KW-0010">Activator</keyword>
<keyword id="KW-0103">Bromodomain</keyword>
<keyword id="KW-0238">DNA-binding</keyword>
<keyword id="KW-0378">Hydrolase</keyword>
<keyword id="KW-1017">Isopeptide bond</keyword>
<keyword id="KW-0524">Neurogenesis</keyword>
<keyword id="KW-0539">Nucleus</keyword>
<keyword id="KW-0597">Phosphoprotein</keyword>
<keyword id="KW-1185">Reference proteome</keyword>
<keyword id="KW-0804">Transcription</keyword>
<keyword id="KW-0805">Transcription regulation</keyword>
<keyword id="KW-0832">Ubl conjugation</keyword>
<comment type="function">
    <text evidence="1 10 16 17">ATPase involved in transcriptional activation and repression of select genes by chromatin remodeling (alteration of DNA-nucleosome topology). Component of SWI/SNF chromatin remodeling complexes that carry out key enzymatic activities, changing chromatin structure by altering DNA-histone contacts within a nucleosome in an ATP-dependent manner. Binds DNA non-specifically (PubMed:22952240, PubMed:26601204). Belongs to the neural progenitors-specific chromatin remodeling complex (npBAF complex) and the neuron-specific chromatin remodeling complex (nBAF complex). During neural development a switch from a stem/progenitor to a postmitotic chromatin remodeling mechanism occurs as neurons exit the cell cycle and become committed to their adult state. The transition from proliferating neural stem/progenitor cells to postmitotic neurons requires a switch in subunit composition of the npBAF and nBAF complexes. As neural progenitors exit mitosis and differentiate into neurons, npBAF complexes which contain ACTL6A/BAF53A and PHF10/BAF45A, are exchanged for homologous alternative ACTL6B/BAF53B and DPF1/BAF45B or DPF3/BAF45C subunits in neuron-specific complexes (nBAF). The npBAF complex is essential for the self-renewal/proliferative capacity of the multipotent neural stem cells. The nBAF complex along with CREST plays a role regulating the activity of genes essential for dendrite growth.</text>
</comment>
<comment type="catalytic activity">
    <reaction evidence="1">
        <text>ATP + H2O = ADP + phosphate + H(+)</text>
        <dbReference type="Rhea" id="RHEA:13065"/>
        <dbReference type="ChEBI" id="CHEBI:15377"/>
        <dbReference type="ChEBI" id="CHEBI:15378"/>
        <dbReference type="ChEBI" id="CHEBI:30616"/>
        <dbReference type="ChEBI" id="CHEBI:43474"/>
        <dbReference type="ChEBI" id="CHEBI:456216"/>
    </reaction>
    <physiologicalReaction direction="left-to-right" evidence="1">
        <dbReference type="Rhea" id="RHEA:13066"/>
    </physiologicalReaction>
</comment>
<comment type="subunit">
    <text evidence="1 9 10 12 16 17">Component of the multiprotein chromatin-remodeling complexes SWI/SNF: SWI/SNF-A (BAF), SWI/SNF-B (PBAF) and related complexes. The canonical complex contains a catalytic subunit (either SMARCA4/BRG1/BAF190A or SMARCA2/BRM/BAF190B) and at least SMARCE1, ACTL6A/BAF53, SMARCC1/BAF155, SMARCC2/BAF170, and SMARCB1/SNF5/BAF47. Other subunits specific to each of the complexes may also be present permitting several possible combinations developmentally and tissue specific (Probable). Component of the BAF complex, which includes at least actin (ACTB), ARID1A/BAF250A, ARID1B/BAF250B, SMARCA2/BRM, SMARCA4/BRG1/BAF190A, ACTL6A/BAF53, ACTL6B/BAF53B, SMARCE1/BAF57, SMARCC1/BAF155, SMARCC2/BAF170, SMARCB1/SNF5/INI1, and one or more SMARCD1/BAF60A, SMARCD2/BAF60B, or SMARCD3/BAF60C (By similarity). In muscle cells, the BAF complex also contains DPF3 (By similarity). Component of neural progenitors-specific chromatin remodeling complex (npBAF complex) composed of at least, ARID1A/BAF250A or ARID1B/BAF250B, SMARCD1/BAF60A, SMARCD3/BAF60C, SMARCA2/BRM/BAF190B, SMARCA4/BRG1/BAF190A, SMARCB1/BAF47, SMARCC1/BAF155, SMARCE1/BAF57, SMARCC2/BAF170, PHF10/BAF45A, ACTL6A/BAF53A and actin. Component of neuron-specific chromatin remodeling complex (nBAF complex) composed of at least, ARID1A/BAF250A or ARID1B/BAF250B, SMARCD1/BAF60A, SMARCD3/BAF60C, SMARCA2/BRM/BAF190B, SMARCA4/BRG1/BAF190A, SMARCB1/BAF47, SMARCC1/BAF155, SMARCE1/BAF57, SMARCC2/BAF170, DPF1/BAF45B, DPF3/BAF45C, ACTL6B/BAF53B and actin (PubMed:17640523). Interacts with PHF10/BAF45A (By similarity). Interacts with CEBPB (when not methylated) (PubMed:20111005). Interacts with TOPBP1 (By similarity). Interacts with CEBPA (when phosphorylated) (PubMed:15107404). Interacts with DPF2 (By similarity). Interacts with ERCC6 (By similarity).</text>
</comment>
<comment type="subcellular location">
    <subcellularLocation>
        <location evidence="6">Nucleus</location>
    </subcellularLocation>
    <text evidence="1">Localizes to sites of DNA damage.</text>
</comment>
<comment type="tissue specificity">
    <text evidence="13">Expressed in the cortex and the hippocampus. Expressed in the cortical plate in the embryo.</text>
</comment>
<comment type="PTM">
    <text evidence="1">During apoptosis, cleaved by cathepsin CTSG to produce a 160 kDa cleavage product which localizes to the cytosol.</text>
</comment>
<comment type="PTM">
    <text evidence="1">Ubiquitinated.</text>
</comment>
<comment type="disruption phenotype">
    <text evidence="11">Impaired social interaction and prepulse inhibition.</text>
</comment>
<comment type="similarity">
    <text evidence="18">Belongs to the SNF2/RAD54 helicase family.</text>
</comment>
<comment type="caution">
    <text evidence="16 17">Like other proteins within the SNF2 family, they do not possess helicase activity but instead remodel chromatin via an ATP-dependent translocation mechanism.</text>
</comment>
<evidence type="ECO:0000250" key="1">
    <source>
        <dbReference type="UniProtKB" id="P51531"/>
    </source>
</evidence>
<evidence type="ECO:0000250" key="2">
    <source>
        <dbReference type="UniProtKB" id="P51532"/>
    </source>
</evidence>
<evidence type="ECO:0000255" key="3">
    <source>
        <dbReference type="PROSITE-ProRule" id="PRU00035"/>
    </source>
</evidence>
<evidence type="ECO:0000255" key="4">
    <source>
        <dbReference type="PROSITE-ProRule" id="PRU00541"/>
    </source>
</evidence>
<evidence type="ECO:0000255" key="5">
    <source>
        <dbReference type="PROSITE-ProRule" id="PRU00542"/>
    </source>
</evidence>
<evidence type="ECO:0000255" key="6">
    <source>
        <dbReference type="PROSITE-ProRule" id="PRU00549"/>
    </source>
</evidence>
<evidence type="ECO:0000255" key="7">
    <source>
        <dbReference type="PROSITE-ProRule" id="PRU01001"/>
    </source>
</evidence>
<evidence type="ECO:0000256" key="8">
    <source>
        <dbReference type="SAM" id="MobiDB-lite"/>
    </source>
</evidence>
<evidence type="ECO:0000269" key="9">
    <source>
    </source>
</evidence>
<evidence type="ECO:0000269" key="10">
    <source>
    </source>
</evidence>
<evidence type="ECO:0000269" key="11">
    <source>
    </source>
</evidence>
<evidence type="ECO:0000269" key="12">
    <source>
    </source>
</evidence>
<evidence type="ECO:0000269" key="13">
    <source>
    </source>
</evidence>
<evidence type="ECO:0000303" key="14">
    <source>
    </source>
</evidence>
<evidence type="ECO:0000303" key="15">
    <source>
    </source>
</evidence>
<evidence type="ECO:0000303" key="16">
    <source>
    </source>
</evidence>
<evidence type="ECO:0000303" key="17">
    <source>
    </source>
</evidence>
<evidence type="ECO:0000305" key="18"/>
<evidence type="ECO:0000312" key="19">
    <source>
        <dbReference type="MGI" id="MGI:99603"/>
    </source>
</evidence>
<evidence type="ECO:0007744" key="20">
    <source>
    </source>
</evidence>
<evidence type="ECO:0007744" key="21">
    <source>
    </source>
</evidence>
<evidence type="ECO:0007744" key="22">
    <source>
    </source>
</evidence>
<dbReference type="EC" id="3.6.4.-" evidence="1"/>
<dbReference type="EMBL" id="BC075641">
    <property type="protein sequence ID" value="AAH75641.1"/>
    <property type="molecule type" value="mRNA"/>
</dbReference>
<dbReference type="RefSeq" id="NP_001334368.1">
    <property type="nucleotide sequence ID" value="NM_001347439.1"/>
</dbReference>
<dbReference type="RefSeq" id="NP_035546.2">
    <property type="nucleotide sequence ID" value="NM_011416.2"/>
</dbReference>
<dbReference type="BMRB" id="Q6DIC0"/>
<dbReference type="SMR" id="Q6DIC0"/>
<dbReference type="BioGRID" id="211982">
    <property type="interactions" value="47"/>
</dbReference>
<dbReference type="ComplexPortal" id="CPX-1232">
    <property type="entry name" value="SWI/SNF ATP-dependent chromatin remodeling complex, ACTL6A-ARID1A-SMARCA2 variant"/>
</dbReference>
<dbReference type="ComplexPortal" id="CPX-1234">
    <property type="entry name" value="SWI/SNF ATP-dependent chromatin remodeling complex, ACTL6A-ARID1B-SMARCA2 variant"/>
</dbReference>
<dbReference type="ComplexPortal" id="CPX-1236">
    <property type="entry name" value="SWI/SNF ATP-dependent chromatin remodeling complex, ACTL6B-ARID1A-SMARCA2 variant"/>
</dbReference>
<dbReference type="ComplexPortal" id="CPX-1238">
    <property type="entry name" value="SWI/SNF ATP-dependent chromatin remodeling complex, ACTL6B-ARID1B-SMARCA2 variant"/>
</dbReference>
<dbReference type="ComplexPortal" id="CPX-1240">
    <property type="entry name" value="Muscle cell-specific SWI/SNF ATP-dependent chromatin remodeling complex, ACTL6A-ARID1A-SMARCA2 variant"/>
</dbReference>
<dbReference type="ComplexPortal" id="CPX-1242">
    <property type="entry name" value="Muscle cell-specific SWI/SNF ATP-dependent chromatin remodeling complex, ACTL6A-ARID1B-SMARCA2 variant"/>
</dbReference>
<dbReference type="ComplexPortal" id="CPX-1244">
    <property type="entry name" value="Muscle cell-specific SWI/SNF ATP-dependent chromatin remodeling complex, ACTL6B-ARID1A-SMARCA2 variant"/>
</dbReference>
<dbReference type="ComplexPortal" id="CPX-1246">
    <property type="entry name" value="Muscle cell-specific SWI/SNF ATP-dependent chromatin remodeling complex, ACTL6B-ARID1B-SMARCA2 variant"/>
</dbReference>
<dbReference type="ComplexPortal" id="CPX-1252">
    <property type="entry name" value="Neural progenitor-specific SWI/SNF ATP-dependent chromatin remodeling complex, ARID1A-SMARCA2 variant"/>
</dbReference>
<dbReference type="ComplexPortal" id="CPX-1254">
    <property type="entry name" value="Neural progenitor-specific SWI/SNF ATP-dependent chromatin remodeling complex, ARID1B-SMARCA2 variant"/>
</dbReference>
<dbReference type="ComplexPortal" id="CPX-1256">
    <property type="entry name" value="Neuron-specific SWI/SNF ATP-dependent chromatin remodeling complex, ARID1A-SMARCA2 variant"/>
</dbReference>
<dbReference type="ComplexPortal" id="CPX-1258">
    <property type="entry name" value="Neuron-specific SWI/SNF ATP-dependent chromatin remodeling complex, ARID1B-SMARCA2 variant"/>
</dbReference>
<dbReference type="ComplexPortal" id="CPX-1261">
    <property type="entry name" value="Brain-specific SWI/SNF ATP-dependent chromatin remodeling complex, ARID1A-SMARCA2 variant"/>
</dbReference>
<dbReference type="ComplexPortal" id="CPX-1263">
    <property type="entry name" value="Brain-specific SWI/SNF ATP-dependent chromatin remodeling complex, ARID1B-SMARCA2 variant"/>
</dbReference>
<dbReference type="ComplexPortal" id="CPX-4202">
    <property type="entry name" value="GBAF (SWI/SNF) ATP-dependent chromatin remodeling complex, ACTL6A-BICRA-SMARCA2 variant"/>
</dbReference>
<dbReference type="ComplexPortal" id="CPX-4204">
    <property type="entry name" value="GBAF (SWI/SNF) ATP-dependent chromatin remodeling complex, ACTL6A-BICRAL-SMARCA2 variant"/>
</dbReference>
<dbReference type="ComplexPortal" id="CPX-4227">
    <property type="entry name" value="GBAF (SWI/SNF) ATP-dependent chromatin remodeling complex, ACTL6B-BICRA-SMARCA2 variant"/>
</dbReference>
<dbReference type="ComplexPortal" id="CPX-4228">
    <property type="entry name" value="GBAF (SWI/SNF) ATP-dependent chromatin remodeling complex, ACTL6B-BICRAL-SMARCA2 variant"/>
</dbReference>
<dbReference type="CORUM" id="Q6DIC0"/>
<dbReference type="DIP" id="DIP-48888N"/>
<dbReference type="FunCoup" id="Q6DIC0">
    <property type="interactions" value="2363"/>
</dbReference>
<dbReference type="IntAct" id="Q6DIC0">
    <property type="interactions" value="3"/>
</dbReference>
<dbReference type="MINT" id="Q6DIC0"/>
<dbReference type="STRING" id="10090.ENSMUSP00000025862"/>
<dbReference type="GlyGen" id="Q6DIC0">
    <property type="glycosylation" value="1 site"/>
</dbReference>
<dbReference type="iPTMnet" id="Q6DIC0"/>
<dbReference type="PhosphoSitePlus" id="Q6DIC0"/>
<dbReference type="SwissPalm" id="Q6DIC0"/>
<dbReference type="jPOST" id="Q6DIC0"/>
<dbReference type="PaxDb" id="10090-ENSMUSP00000025862"/>
<dbReference type="ProteomicsDB" id="261523"/>
<dbReference type="Pumba" id="Q6DIC0"/>
<dbReference type="DNASU" id="67155"/>
<dbReference type="GeneID" id="67155"/>
<dbReference type="KEGG" id="mmu:67155"/>
<dbReference type="UCSC" id="uc012bjw.1">
    <property type="organism name" value="mouse"/>
</dbReference>
<dbReference type="AGR" id="MGI:99603"/>
<dbReference type="CTD" id="6595"/>
<dbReference type="MGI" id="MGI:99603">
    <property type="gene designation" value="Smarca2"/>
</dbReference>
<dbReference type="eggNOG" id="KOG0386">
    <property type="taxonomic scope" value="Eukaryota"/>
</dbReference>
<dbReference type="InParanoid" id="Q6DIC0"/>
<dbReference type="PhylomeDB" id="Q6DIC0"/>
<dbReference type="Reactome" id="R-MMU-3214858">
    <property type="pathway name" value="RMTs methylate histone arginines"/>
</dbReference>
<dbReference type="Reactome" id="R-MMU-8939243">
    <property type="pathway name" value="RUNX1 interacts with co-factors whose precise effect on RUNX1 targets is not known"/>
</dbReference>
<dbReference type="BioGRID-ORCS" id="67155">
    <property type="hits" value="4 hits in 81 CRISPR screens"/>
</dbReference>
<dbReference type="ChiTaRS" id="Smarca2">
    <property type="organism name" value="mouse"/>
</dbReference>
<dbReference type="PRO" id="PR:Q6DIC0"/>
<dbReference type="Proteomes" id="UP000000589">
    <property type="component" value="Unplaced"/>
</dbReference>
<dbReference type="RNAct" id="Q6DIC0">
    <property type="molecule type" value="protein"/>
</dbReference>
<dbReference type="GO" id="GO:0140092">
    <property type="term" value="C:bBAF complex"/>
    <property type="evidence" value="ECO:0000303"/>
    <property type="project" value="ComplexPortal"/>
</dbReference>
<dbReference type="GO" id="GO:0035060">
    <property type="term" value="C:brahma complex"/>
    <property type="evidence" value="ECO:0000303"/>
    <property type="project" value="ComplexPortal"/>
</dbReference>
<dbReference type="GO" id="GO:0000785">
    <property type="term" value="C:chromatin"/>
    <property type="evidence" value="ECO:0000303"/>
    <property type="project" value="ComplexPortal"/>
</dbReference>
<dbReference type="GO" id="GO:0140288">
    <property type="term" value="C:GBAF complex"/>
    <property type="evidence" value="ECO:0000303"/>
    <property type="project" value="ComplexPortal"/>
</dbReference>
<dbReference type="GO" id="GO:0071565">
    <property type="term" value="C:nBAF complex"/>
    <property type="evidence" value="ECO:0000314"/>
    <property type="project" value="UniProtKB"/>
</dbReference>
<dbReference type="GO" id="GO:0071564">
    <property type="term" value="C:npBAF complex"/>
    <property type="evidence" value="ECO:0000314"/>
    <property type="project" value="UniProtKB"/>
</dbReference>
<dbReference type="GO" id="GO:0005654">
    <property type="term" value="C:nucleoplasm"/>
    <property type="evidence" value="ECO:0000304"/>
    <property type="project" value="Reactome"/>
</dbReference>
<dbReference type="GO" id="GO:0005634">
    <property type="term" value="C:nucleus"/>
    <property type="evidence" value="ECO:0000314"/>
    <property type="project" value="MGI"/>
</dbReference>
<dbReference type="GO" id="GO:0016514">
    <property type="term" value="C:SWI/SNF complex"/>
    <property type="evidence" value="ECO:0000304"/>
    <property type="project" value="MGI"/>
</dbReference>
<dbReference type="GO" id="GO:0005524">
    <property type="term" value="F:ATP binding"/>
    <property type="evidence" value="ECO:0007669"/>
    <property type="project" value="UniProtKB-KW"/>
</dbReference>
<dbReference type="GO" id="GO:0003677">
    <property type="term" value="F:DNA binding"/>
    <property type="evidence" value="ECO:0007669"/>
    <property type="project" value="UniProtKB-KW"/>
</dbReference>
<dbReference type="GO" id="GO:0004386">
    <property type="term" value="F:helicase activity"/>
    <property type="evidence" value="ECO:0007669"/>
    <property type="project" value="UniProtKB-KW"/>
</dbReference>
<dbReference type="GO" id="GO:0042393">
    <property type="term" value="F:histone binding"/>
    <property type="evidence" value="ECO:0007669"/>
    <property type="project" value="InterPro"/>
</dbReference>
<dbReference type="GO" id="GO:0016787">
    <property type="term" value="F:hydrolase activity"/>
    <property type="evidence" value="ECO:0007669"/>
    <property type="project" value="UniProtKB-KW"/>
</dbReference>
<dbReference type="GO" id="GO:0035887">
    <property type="term" value="P:aortic smooth muscle cell differentiation"/>
    <property type="evidence" value="ECO:0000315"/>
    <property type="project" value="MGI"/>
</dbReference>
<dbReference type="GO" id="GO:0008283">
    <property type="term" value="P:cell population proliferation"/>
    <property type="evidence" value="ECO:0000315"/>
    <property type="project" value="MGI"/>
</dbReference>
<dbReference type="GO" id="GO:0006325">
    <property type="term" value="P:chromatin organization"/>
    <property type="evidence" value="ECO:0000304"/>
    <property type="project" value="MGI"/>
</dbReference>
<dbReference type="GO" id="GO:0006338">
    <property type="term" value="P:chromatin remodeling"/>
    <property type="evidence" value="ECO:0000303"/>
    <property type="project" value="ComplexPortal"/>
</dbReference>
<dbReference type="GO" id="GO:0048144">
    <property type="term" value="P:fibroblast proliferation"/>
    <property type="evidence" value="ECO:0000315"/>
    <property type="project" value="MGI"/>
</dbReference>
<dbReference type="GO" id="GO:0061484">
    <property type="term" value="P:hematopoietic stem cell homeostasis"/>
    <property type="evidence" value="ECO:0000315"/>
    <property type="project" value="MGI"/>
</dbReference>
<dbReference type="GO" id="GO:0045596">
    <property type="term" value="P:negative regulation of cell differentiation"/>
    <property type="evidence" value="ECO:0000303"/>
    <property type="project" value="ComplexPortal"/>
</dbReference>
<dbReference type="GO" id="GO:0008285">
    <property type="term" value="P:negative regulation of cell population proliferation"/>
    <property type="evidence" value="ECO:0000315"/>
    <property type="project" value="MGI"/>
</dbReference>
<dbReference type="GO" id="GO:0048147">
    <property type="term" value="P:negative regulation of fibroblast proliferation"/>
    <property type="evidence" value="ECO:0000315"/>
    <property type="project" value="MGI"/>
</dbReference>
<dbReference type="GO" id="GO:0007399">
    <property type="term" value="P:nervous system development"/>
    <property type="evidence" value="ECO:0007669"/>
    <property type="project" value="UniProtKB-KW"/>
</dbReference>
<dbReference type="GO" id="GO:0006334">
    <property type="term" value="P:nucleosome assembly"/>
    <property type="evidence" value="ECO:0000304"/>
    <property type="project" value="MGI"/>
</dbReference>
<dbReference type="GO" id="GO:0045597">
    <property type="term" value="P:positive regulation of cell differentiation"/>
    <property type="evidence" value="ECO:0000303"/>
    <property type="project" value="ComplexPortal"/>
</dbReference>
<dbReference type="GO" id="GO:0008284">
    <property type="term" value="P:positive regulation of cell population proliferation"/>
    <property type="evidence" value="ECO:0000303"/>
    <property type="project" value="ComplexPortal"/>
</dbReference>
<dbReference type="GO" id="GO:2000781">
    <property type="term" value="P:positive regulation of double-strand break repair"/>
    <property type="evidence" value="ECO:0000303"/>
    <property type="project" value="ComplexPortal"/>
</dbReference>
<dbReference type="GO" id="GO:0045663">
    <property type="term" value="P:positive regulation of myoblast differentiation"/>
    <property type="evidence" value="ECO:0000303"/>
    <property type="project" value="ComplexPortal"/>
</dbReference>
<dbReference type="GO" id="GO:1902459">
    <property type="term" value="P:positive regulation of stem cell population maintenance"/>
    <property type="evidence" value="ECO:0000303"/>
    <property type="project" value="ComplexPortal"/>
</dbReference>
<dbReference type="GO" id="GO:0045582">
    <property type="term" value="P:positive regulation of T cell differentiation"/>
    <property type="evidence" value="ECO:0000303"/>
    <property type="project" value="ComplexPortal"/>
</dbReference>
<dbReference type="GO" id="GO:0070316">
    <property type="term" value="P:regulation of G0 to G1 transition"/>
    <property type="evidence" value="ECO:0000303"/>
    <property type="project" value="ComplexPortal"/>
</dbReference>
<dbReference type="GO" id="GO:2000045">
    <property type="term" value="P:regulation of G1/S transition of mitotic cell cycle"/>
    <property type="evidence" value="ECO:0000303"/>
    <property type="project" value="ComplexPortal"/>
</dbReference>
<dbReference type="GO" id="GO:0030071">
    <property type="term" value="P:regulation of mitotic metaphase/anaphase transition"/>
    <property type="evidence" value="ECO:0000303"/>
    <property type="project" value="ComplexPortal"/>
</dbReference>
<dbReference type="GO" id="GO:2000819">
    <property type="term" value="P:regulation of nucleotide-excision repair"/>
    <property type="evidence" value="ECO:0000303"/>
    <property type="project" value="ComplexPortal"/>
</dbReference>
<dbReference type="GO" id="GO:0006357">
    <property type="term" value="P:regulation of transcription by RNA polymerase II"/>
    <property type="evidence" value="ECO:0000303"/>
    <property type="project" value="ComplexPortal"/>
</dbReference>
<dbReference type="CDD" id="cd05516">
    <property type="entry name" value="Bromo_SNF2L2"/>
    <property type="match status" value="1"/>
</dbReference>
<dbReference type="CDD" id="cd18063">
    <property type="entry name" value="DEXHc_SMARCA2"/>
    <property type="match status" value="1"/>
</dbReference>
<dbReference type="CDD" id="cd18793">
    <property type="entry name" value="SF2_C_SNF"/>
    <property type="match status" value="1"/>
</dbReference>
<dbReference type="FunFam" id="3.40.50.10810:FF:000008">
    <property type="entry name" value="Chromatin structure-remodeling complex subunit snf21"/>
    <property type="match status" value="1"/>
</dbReference>
<dbReference type="FunFam" id="1.20.920.10:FF:000004">
    <property type="entry name" value="probable global transcription activator SNF2L2 isoform X1"/>
    <property type="match status" value="1"/>
</dbReference>
<dbReference type="FunFam" id="3.40.5.120:FF:000001">
    <property type="entry name" value="probable global transcription activator SNF2L2 isoform X1"/>
    <property type="match status" value="1"/>
</dbReference>
<dbReference type="FunFam" id="1.20.5.170:FF:000089">
    <property type="entry name" value="Putative global transcription activator SNF2L2"/>
    <property type="match status" value="1"/>
</dbReference>
<dbReference type="FunFam" id="3.40.50.300:FF:003020">
    <property type="entry name" value="SNF2-related domain-containing protein"/>
    <property type="match status" value="1"/>
</dbReference>
<dbReference type="Gene3D" id="1.20.5.170">
    <property type="match status" value="1"/>
</dbReference>
<dbReference type="Gene3D" id="3.40.5.120">
    <property type="match status" value="1"/>
</dbReference>
<dbReference type="Gene3D" id="1.20.920.10">
    <property type="entry name" value="Bromodomain-like"/>
    <property type="match status" value="1"/>
</dbReference>
<dbReference type="Gene3D" id="3.40.50.300">
    <property type="entry name" value="P-loop containing nucleotide triphosphate hydrolases"/>
    <property type="match status" value="1"/>
</dbReference>
<dbReference type="Gene3D" id="3.40.50.10810">
    <property type="entry name" value="Tandem AAA-ATPase domain"/>
    <property type="match status" value="1"/>
</dbReference>
<dbReference type="InterPro" id="IPR006576">
    <property type="entry name" value="BRK_domain"/>
</dbReference>
<dbReference type="InterPro" id="IPR037259">
    <property type="entry name" value="BRK_sf"/>
</dbReference>
<dbReference type="InterPro" id="IPR001487">
    <property type="entry name" value="Bromodomain"/>
</dbReference>
<dbReference type="InterPro" id="IPR036427">
    <property type="entry name" value="Bromodomain-like_sf"/>
</dbReference>
<dbReference type="InterPro" id="IPR018359">
    <property type="entry name" value="Bromodomain_CS"/>
</dbReference>
<dbReference type="InterPro" id="IPR014978">
    <property type="entry name" value="Gln-Leu-Gln_QLQ"/>
</dbReference>
<dbReference type="InterPro" id="IPR014001">
    <property type="entry name" value="Helicase_ATP-bd"/>
</dbReference>
<dbReference type="InterPro" id="IPR001650">
    <property type="entry name" value="Helicase_C-like"/>
</dbReference>
<dbReference type="InterPro" id="IPR014012">
    <property type="entry name" value="HSA_dom"/>
</dbReference>
<dbReference type="InterPro" id="IPR027417">
    <property type="entry name" value="P-loop_NTPase"/>
</dbReference>
<dbReference type="InterPro" id="IPR029295">
    <property type="entry name" value="SnAC"/>
</dbReference>
<dbReference type="InterPro" id="IPR038718">
    <property type="entry name" value="SNF2-like_sf"/>
</dbReference>
<dbReference type="InterPro" id="IPR049730">
    <property type="entry name" value="SNF2/RAD54-like_C"/>
</dbReference>
<dbReference type="InterPro" id="IPR000330">
    <property type="entry name" value="SNF2_N"/>
</dbReference>
<dbReference type="PANTHER" id="PTHR10799">
    <property type="entry name" value="SNF2/RAD54 HELICASE FAMILY"/>
    <property type="match status" value="1"/>
</dbReference>
<dbReference type="Pfam" id="PF07533">
    <property type="entry name" value="BRK"/>
    <property type="match status" value="1"/>
</dbReference>
<dbReference type="Pfam" id="PF00439">
    <property type="entry name" value="Bromodomain"/>
    <property type="match status" value="1"/>
</dbReference>
<dbReference type="Pfam" id="PF00271">
    <property type="entry name" value="Helicase_C"/>
    <property type="match status" value="1"/>
</dbReference>
<dbReference type="Pfam" id="PF07529">
    <property type="entry name" value="HSA"/>
    <property type="match status" value="1"/>
</dbReference>
<dbReference type="Pfam" id="PF14619">
    <property type="entry name" value="SnAC"/>
    <property type="match status" value="1"/>
</dbReference>
<dbReference type="Pfam" id="PF00176">
    <property type="entry name" value="SNF2-rel_dom"/>
    <property type="match status" value="1"/>
</dbReference>
<dbReference type="PRINTS" id="PR00503">
    <property type="entry name" value="BROMODOMAIN"/>
</dbReference>
<dbReference type="SMART" id="SM00592">
    <property type="entry name" value="BRK"/>
    <property type="match status" value="1"/>
</dbReference>
<dbReference type="SMART" id="SM00297">
    <property type="entry name" value="BROMO"/>
    <property type="match status" value="1"/>
</dbReference>
<dbReference type="SMART" id="SM00487">
    <property type="entry name" value="DEXDc"/>
    <property type="match status" value="1"/>
</dbReference>
<dbReference type="SMART" id="SM00490">
    <property type="entry name" value="HELICc"/>
    <property type="match status" value="1"/>
</dbReference>
<dbReference type="SMART" id="SM00573">
    <property type="entry name" value="HSA"/>
    <property type="match status" value="1"/>
</dbReference>
<dbReference type="SMART" id="SM00951">
    <property type="entry name" value="QLQ"/>
    <property type="match status" value="1"/>
</dbReference>
<dbReference type="SMART" id="SM01314">
    <property type="entry name" value="SnAC"/>
    <property type="match status" value="1"/>
</dbReference>
<dbReference type="SUPFAM" id="SSF160481">
    <property type="entry name" value="BRK domain-like"/>
    <property type="match status" value="1"/>
</dbReference>
<dbReference type="SUPFAM" id="SSF47370">
    <property type="entry name" value="Bromodomain"/>
    <property type="match status" value="1"/>
</dbReference>
<dbReference type="SUPFAM" id="SSF52540">
    <property type="entry name" value="P-loop containing nucleoside triphosphate hydrolases"/>
    <property type="match status" value="2"/>
</dbReference>
<dbReference type="PROSITE" id="PS00633">
    <property type="entry name" value="BROMODOMAIN_1"/>
    <property type="match status" value="1"/>
</dbReference>
<dbReference type="PROSITE" id="PS50014">
    <property type="entry name" value="BROMODOMAIN_2"/>
    <property type="match status" value="1"/>
</dbReference>
<dbReference type="PROSITE" id="PS51192">
    <property type="entry name" value="HELICASE_ATP_BIND_1"/>
    <property type="match status" value="1"/>
</dbReference>
<dbReference type="PROSITE" id="PS51194">
    <property type="entry name" value="HELICASE_CTER"/>
    <property type="match status" value="1"/>
</dbReference>
<dbReference type="PROSITE" id="PS51204">
    <property type="entry name" value="HSA"/>
    <property type="match status" value="1"/>
</dbReference>
<dbReference type="PROSITE" id="PS51666">
    <property type="entry name" value="QLQ"/>
    <property type="match status" value="1"/>
</dbReference>
<feature type="chain" id="PRO_0000391618" description="SWI/SNF-related matrix-associated actin-dependent regulator of chromatin subfamily A member 2">
    <location>
        <begin position="1"/>
        <end position="1577"/>
    </location>
</feature>
<feature type="domain" description="QLQ" evidence="7">
    <location>
        <begin position="167"/>
        <end position="202"/>
    </location>
</feature>
<feature type="domain" description="HSA" evidence="6">
    <location>
        <begin position="441"/>
        <end position="513"/>
    </location>
</feature>
<feature type="domain" description="Helicase ATP-binding" evidence="4">
    <location>
        <begin position="741"/>
        <end position="906"/>
    </location>
</feature>
<feature type="domain" description="Helicase C-terminal" evidence="5">
    <location>
        <begin position="1059"/>
        <end position="1221"/>
    </location>
</feature>
<feature type="domain" description="Bromo" evidence="3">
    <location>
        <begin position="1383"/>
        <end position="1493"/>
    </location>
</feature>
<feature type="region of interest" description="Disordered" evidence="8">
    <location>
        <begin position="1"/>
        <end position="77"/>
    </location>
</feature>
<feature type="region of interest" description="Disordered" evidence="8">
    <location>
        <begin position="93"/>
        <end position="170"/>
    </location>
</feature>
<feature type="region of interest" description="Disordered" evidence="8">
    <location>
        <begin position="205"/>
        <end position="340"/>
    </location>
</feature>
<feature type="region of interest" description="Disordered" evidence="8">
    <location>
        <begin position="556"/>
        <end position="597"/>
    </location>
</feature>
<feature type="region of interest" description="Disordered" evidence="8">
    <location>
        <begin position="632"/>
        <end position="677"/>
    </location>
</feature>
<feature type="region of interest" description="Disordered" evidence="8">
    <location>
        <begin position="1351"/>
        <end position="1388"/>
    </location>
</feature>
<feature type="region of interest" description="Disordered" evidence="8">
    <location>
        <begin position="1493"/>
        <end position="1577"/>
    </location>
</feature>
<feature type="short sequence motif" description="DEGH box">
    <location>
        <begin position="856"/>
        <end position="859"/>
    </location>
</feature>
<feature type="compositionally biased region" description="Pro residues" evidence="8">
    <location>
        <begin position="10"/>
        <end position="36"/>
    </location>
</feature>
<feature type="compositionally biased region" description="Low complexity" evidence="8">
    <location>
        <begin position="37"/>
        <end position="46"/>
    </location>
</feature>
<feature type="compositionally biased region" description="Pro residues" evidence="8">
    <location>
        <begin position="101"/>
        <end position="111"/>
    </location>
</feature>
<feature type="compositionally biased region" description="Pro residues" evidence="8">
    <location>
        <begin position="137"/>
        <end position="146"/>
    </location>
</feature>
<feature type="compositionally biased region" description="Low complexity" evidence="8">
    <location>
        <begin position="210"/>
        <end position="258"/>
    </location>
</feature>
<feature type="compositionally biased region" description="Low complexity" evidence="8">
    <location>
        <begin position="296"/>
        <end position="308"/>
    </location>
</feature>
<feature type="compositionally biased region" description="Polar residues" evidence="8">
    <location>
        <begin position="311"/>
        <end position="334"/>
    </location>
</feature>
<feature type="compositionally biased region" description="Basic residues" evidence="8">
    <location>
        <begin position="560"/>
        <end position="569"/>
    </location>
</feature>
<feature type="compositionally biased region" description="Acidic residues" evidence="8">
    <location>
        <begin position="641"/>
        <end position="655"/>
    </location>
</feature>
<feature type="compositionally biased region" description="Basic and acidic residues" evidence="8">
    <location>
        <begin position="656"/>
        <end position="666"/>
    </location>
</feature>
<feature type="compositionally biased region" description="Basic and acidic residues" evidence="8">
    <location>
        <begin position="1357"/>
        <end position="1368"/>
    </location>
</feature>
<feature type="compositionally biased region" description="Acidic residues" evidence="8">
    <location>
        <begin position="1497"/>
        <end position="1516"/>
    </location>
</feature>
<feature type="compositionally biased region" description="Basic and acidic residues" evidence="8">
    <location>
        <begin position="1529"/>
        <end position="1540"/>
    </location>
</feature>
<feature type="compositionally biased region" description="Basic residues" evidence="8">
    <location>
        <begin position="1541"/>
        <end position="1550"/>
    </location>
</feature>
<feature type="compositionally biased region" description="Acidic residues" evidence="8">
    <location>
        <begin position="1557"/>
        <end position="1568"/>
    </location>
</feature>
<feature type="binding site" evidence="4">
    <location>
        <begin position="754"/>
        <end position="761"/>
    </location>
    <ligand>
        <name>ATP</name>
        <dbReference type="ChEBI" id="CHEBI:30616"/>
    </ligand>
</feature>
<feature type="modified residue" description="Phosphoserine" evidence="1">
    <location>
        <position position="166"/>
    </location>
</feature>
<feature type="modified residue" description="Phosphoserine" evidence="1">
    <location>
        <position position="169"/>
    </location>
</feature>
<feature type="modified residue" description="N6-acetyllysine" evidence="2">
    <location>
        <position position="184"/>
    </location>
</feature>
<feature type="modified residue" description="Phosphoserine" evidence="21">
    <location>
        <position position="321"/>
    </location>
</feature>
<feature type="modified residue" description="Phosphoserine" evidence="20 21">
    <location>
        <position position="334"/>
    </location>
</feature>
<feature type="modified residue" description="Phosphoserine" evidence="2">
    <location>
        <position position="593"/>
    </location>
</feature>
<feature type="modified residue" description="Phosphoserine" evidence="21">
    <location>
        <position position="596"/>
    </location>
</feature>
<feature type="modified residue" description="N6-acetyllysine" evidence="22">
    <location>
        <position position="609"/>
    </location>
</feature>
<feature type="modified residue" description="Phosphoserine" evidence="1">
    <location>
        <position position="671"/>
    </location>
</feature>
<feature type="modified residue" description="Phosphoserine" evidence="2">
    <location>
        <position position="675"/>
    </location>
</feature>
<feature type="modified residue" description="N6-acetyllysine" evidence="1">
    <location>
        <position position="1002"/>
    </location>
</feature>
<feature type="modified residue" description="N6-acetyllysine" evidence="1">
    <location>
        <position position="1004"/>
    </location>
</feature>
<feature type="modified residue" description="Phosphoserine" evidence="1">
    <location>
        <position position="1382"/>
    </location>
</feature>
<feature type="modified residue" description="Phosphoserine" evidence="20 21">
    <location>
        <position position="1499"/>
    </location>
</feature>
<feature type="modified residue" description="Phosphoserine" evidence="20 21">
    <location>
        <position position="1503"/>
    </location>
</feature>
<feature type="modified residue" description="Phosphoserine" evidence="21">
    <location>
        <position position="1515"/>
    </location>
</feature>
<feature type="modified residue" description="Phosphoserine" evidence="1">
    <location>
        <position position="1555"/>
    </location>
</feature>
<feature type="modified residue" description="Phosphoserine" evidence="1">
    <location>
        <position position="1559"/>
    </location>
</feature>
<feature type="cross-link" description="Glycyl lysine isopeptide (Lys-Gly) (interchain with G-Cter in SUMO2)" evidence="2">
    <location>
        <position position="1307"/>
    </location>
</feature>
<gene>
    <name evidence="19" type="primary">Smarca2</name>
    <name type="synonym">Baf190b</name>
    <name evidence="15" type="synonym">Brm</name>
    <name type="synonym">Snf2a</name>
    <name evidence="14" type="synonym">Snf2l2</name>
</gene>
<name>SMCA2_MOUSE</name>